<accession>Q87DI2</accession>
<sequence length="294" mass="32434">MSRLVEDFFAFLHVERGMSSHTLDAYRRDIGALIAWGGQQAVGEVVALDRAQLQAFVSAEHRRGLSAKSLQRRLSACRGFYTWLVKRGHIAVNPAAGLRAPKALRKLPRILDADEAVSFVQIPTDTPLGLRDRALLELFYSSGLRLSELCGLRWDGLDLDAGLVSVLGKGSRQRVVPVGSYALSALREWCASSGGGAQQPVFPGRYGGPISARAVQVRIKQLAQRQGMAKHVHPHMLRHSFASHLLESSGDLRGVQELLGHADITTTQIYTHLDFQYLSKVYDAAHPRARRKAR</sequence>
<protein>
    <recommendedName>
        <fullName evidence="1">Tyrosine recombinase XerC</fullName>
    </recommendedName>
</protein>
<organism>
    <name type="scientific">Xylella fastidiosa (strain Temecula1 / ATCC 700964)</name>
    <dbReference type="NCBI Taxonomy" id="183190"/>
    <lineage>
        <taxon>Bacteria</taxon>
        <taxon>Pseudomonadati</taxon>
        <taxon>Pseudomonadota</taxon>
        <taxon>Gammaproteobacteria</taxon>
        <taxon>Lysobacterales</taxon>
        <taxon>Lysobacteraceae</taxon>
        <taxon>Xylella</taxon>
    </lineage>
</organism>
<gene>
    <name evidence="1" type="primary">xerC</name>
    <name type="ordered locus">PD_0700</name>
</gene>
<keyword id="KW-0131">Cell cycle</keyword>
<keyword id="KW-0132">Cell division</keyword>
<keyword id="KW-0159">Chromosome partition</keyword>
<keyword id="KW-0963">Cytoplasm</keyword>
<keyword id="KW-0229">DNA integration</keyword>
<keyword id="KW-0233">DNA recombination</keyword>
<keyword id="KW-0238">DNA-binding</keyword>
<keyword id="KW-1185">Reference proteome</keyword>
<comment type="function">
    <text evidence="1">Site-specific tyrosine recombinase, which acts by catalyzing the cutting and rejoining of the recombining DNA molecules. The XerC-XerD complex is essential to convert dimers of the bacterial chromosome into monomers to permit their segregation at cell division. It also contributes to the segregational stability of plasmids.</text>
</comment>
<comment type="subunit">
    <text evidence="1">Forms a cyclic heterotetrameric complex composed of two molecules of XerC and two molecules of XerD.</text>
</comment>
<comment type="subcellular location">
    <subcellularLocation>
        <location evidence="1">Cytoplasm</location>
    </subcellularLocation>
</comment>
<comment type="similarity">
    <text evidence="1">Belongs to the 'phage' integrase family. XerC subfamily.</text>
</comment>
<feature type="chain" id="PRO_0000095350" description="Tyrosine recombinase XerC">
    <location>
        <begin position="1"/>
        <end position="294"/>
    </location>
</feature>
<feature type="domain" description="Core-binding (CB)" evidence="3">
    <location>
        <begin position="1"/>
        <end position="85"/>
    </location>
</feature>
<feature type="domain" description="Tyr recombinase" evidence="2">
    <location>
        <begin position="106"/>
        <end position="283"/>
    </location>
</feature>
<feature type="active site" evidence="1">
    <location>
        <position position="145"/>
    </location>
</feature>
<feature type="active site" evidence="1">
    <location>
        <position position="169"/>
    </location>
</feature>
<feature type="active site" evidence="1">
    <location>
        <position position="235"/>
    </location>
</feature>
<feature type="active site" evidence="1">
    <location>
        <position position="238"/>
    </location>
</feature>
<feature type="active site" evidence="1">
    <location>
        <position position="261"/>
    </location>
</feature>
<feature type="active site" description="O-(3'-phospho-DNA)-tyrosine intermediate" evidence="1">
    <location>
        <position position="270"/>
    </location>
</feature>
<reference key="1">
    <citation type="journal article" date="2003" name="J. Bacteriol.">
        <title>Comparative analyses of the complete genome sequences of Pierce's disease and citrus variegated chlorosis strains of Xylella fastidiosa.</title>
        <authorList>
            <person name="Van Sluys M.A."/>
            <person name="de Oliveira M.C."/>
            <person name="Monteiro-Vitorello C.B."/>
            <person name="Miyaki C.Y."/>
            <person name="Furlan L.R."/>
            <person name="Camargo L.E.A."/>
            <person name="da Silva A.C.R."/>
            <person name="Moon D.H."/>
            <person name="Takita M.A."/>
            <person name="Lemos E.G.M."/>
            <person name="Machado M.A."/>
            <person name="Ferro M.I.T."/>
            <person name="da Silva F.R."/>
            <person name="Goldman M.H.S."/>
            <person name="Goldman G.H."/>
            <person name="Lemos M.V.F."/>
            <person name="El-Dorry H."/>
            <person name="Tsai S.M."/>
            <person name="Carrer H."/>
            <person name="Carraro D.M."/>
            <person name="de Oliveira R.C."/>
            <person name="Nunes L.R."/>
            <person name="Siqueira W.J."/>
            <person name="Coutinho L.L."/>
            <person name="Kimura E.T."/>
            <person name="Ferro E.S."/>
            <person name="Harakava R."/>
            <person name="Kuramae E.E."/>
            <person name="Marino C.L."/>
            <person name="Giglioti E."/>
            <person name="Abreu I.L."/>
            <person name="Alves L.M.C."/>
            <person name="do Amaral A.M."/>
            <person name="Baia G.S."/>
            <person name="Blanco S.R."/>
            <person name="Brito M.S."/>
            <person name="Cannavan F.S."/>
            <person name="Celestino A.V."/>
            <person name="da Cunha A.F."/>
            <person name="Fenille R.C."/>
            <person name="Ferro J.A."/>
            <person name="Formighieri E.F."/>
            <person name="Kishi L.T."/>
            <person name="Leoni S.G."/>
            <person name="Oliveira A.R."/>
            <person name="Rosa V.E. Jr."/>
            <person name="Sassaki F.T."/>
            <person name="Sena J.A.D."/>
            <person name="de Souza A.A."/>
            <person name="Truffi D."/>
            <person name="Tsukumo F."/>
            <person name="Yanai G.M."/>
            <person name="Zaros L.G."/>
            <person name="Civerolo E.L."/>
            <person name="Simpson A.J.G."/>
            <person name="Almeida N.F. Jr."/>
            <person name="Setubal J.C."/>
            <person name="Kitajima J.P."/>
        </authorList>
    </citation>
    <scope>NUCLEOTIDE SEQUENCE [LARGE SCALE GENOMIC DNA]</scope>
    <source>
        <strain>Temecula1 / ATCC 700964</strain>
    </source>
</reference>
<name>XERC_XYLFT</name>
<dbReference type="EMBL" id="AE009442">
    <property type="protein sequence ID" value="AAO28571.1"/>
    <property type="molecule type" value="Genomic_DNA"/>
</dbReference>
<dbReference type="RefSeq" id="WP_004089050.1">
    <property type="nucleotide sequence ID" value="NC_004556.1"/>
</dbReference>
<dbReference type="SMR" id="Q87DI2"/>
<dbReference type="KEGG" id="xft:PD_0700"/>
<dbReference type="HOGENOM" id="CLU_027562_9_0_6"/>
<dbReference type="Proteomes" id="UP000002516">
    <property type="component" value="Chromosome"/>
</dbReference>
<dbReference type="GO" id="GO:0005737">
    <property type="term" value="C:cytoplasm"/>
    <property type="evidence" value="ECO:0007669"/>
    <property type="project" value="UniProtKB-SubCell"/>
</dbReference>
<dbReference type="GO" id="GO:0003677">
    <property type="term" value="F:DNA binding"/>
    <property type="evidence" value="ECO:0007669"/>
    <property type="project" value="UniProtKB-KW"/>
</dbReference>
<dbReference type="GO" id="GO:0009037">
    <property type="term" value="F:tyrosine-based site-specific recombinase activity"/>
    <property type="evidence" value="ECO:0007669"/>
    <property type="project" value="UniProtKB-UniRule"/>
</dbReference>
<dbReference type="GO" id="GO:0051301">
    <property type="term" value="P:cell division"/>
    <property type="evidence" value="ECO:0007669"/>
    <property type="project" value="UniProtKB-KW"/>
</dbReference>
<dbReference type="GO" id="GO:0007059">
    <property type="term" value="P:chromosome segregation"/>
    <property type="evidence" value="ECO:0007669"/>
    <property type="project" value="UniProtKB-UniRule"/>
</dbReference>
<dbReference type="GO" id="GO:0006313">
    <property type="term" value="P:DNA transposition"/>
    <property type="evidence" value="ECO:0007669"/>
    <property type="project" value="UniProtKB-UniRule"/>
</dbReference>
<dbReference type="CDD" id="cd00798">
    <property type="entry name" value="INT_XerDC_C"/>
    <property type="match status" value="1"/>
</dbReference>
<dbReference type="Gene3D" id="1.10.150.130">
    <property type="match status" value="1"/>
</dbReference>
<dbReference type="Gene3D" id="1.10.443.10">
    <property type="entry name" value="Intergrase catalytic core"/>
    <property type="match status" value="1"/>
</dbReference>
<dbReference type="HAMAP" id="MF_01808">
    <property type="entry name" value="Recomb_XerC_XerD"/>
    <property type="match status" value="1"/>
</dbReference>
<dbReference type="InterPro" id="IPR044068">
    <property type="entry name" value="CB"/>
</dbReference>
<dbReference type="InterPro" id="IPR011010">
    <property type="entry name" value="DNA_brk_join_enz"/>
</dbReference>
<dbReference type="InterPro" id="IPR013762">
    <property type="entry name" value="Integrase-like_cat_sf"/>
</dbReference>
<dbReference type="InterPro" id="IPR002104">
    <property type="entry name" value="Integrase_catalytic"/>
</dbReference>
<dbReference type="InterPro" id="IPR010998">
    <property type="entry name" value="Integrase_recombinase_N"/>
</dbReference>
<dbReference type="InterPro" id="IPR004107">
    <property type="entry name" value="Integrase_SAM-like_N"/>
</dbReference>
<dbReference type="InterPro" id="IPR011931">
    <property type="entry name" value="Recomb_XerC"/>
</dbReference>
<dbReference type="InterPro" id="IPR023009">
    <property type="entry name" value="Tyrosine_recombinase_XerC/XerD"/>
</dbReference>
<dbReference type="InterPro" id="IPR050090">
    <property type="entry name" value="Tyrosine_recombinase_XerCD"/>
</dbReference>
<dbReference type="NCBIfam" id="NF001399">
    <property type="entry name" value="PRK00283.1"/>
    <property type="match status" value="1"/>
</dbReference>
<dbReference type="NCBIfam" id="TIGR02224">
    <property type="entry name" value="recomb_XerC"/>
    <property type="match status" value="1"/>
</dbReference>
<dbReference type="PANTHER" id="PTHR30349">
    <property type="entry name" value="PHAGE INTEGRASE-RELATED"/>
    <property type="match status" value="1"/>
</dbReference>
<dbReference type="PANTHER" id="PTHR30349:SF81">
    <property type="entry name" value="TYROSINE RECOMBINASE XERC"/>
    <property type="match status" value="1"/>
</dbReference>
<dbReference type="Pfam" id="PF02899">
    <property type="entry name" value="Phage_int_SAM_1"/>
    <property type="match status" value="1"/>
</dbReference>
<dbReference type="Pfam" id="PF00589">
    <property type="entry name" value="Phage_integrase"/>
    <property type="match status" value="1"/>
</dbReference>
<dbReference type="SUPFAM" id="SSF56349">
    <property type="entry name" value="DNA breaking-rejoining enzymes"/>
    <property type="match status" value="1"/>
</dbReference>
<dbReference type="PROSITE" id="PS51900">
    <property type="entry name" value="CB"/>
    <property type="match status" value="1"/>
</dbReference>
<dbReference type="PROSITE" id="PS51898">
    <property type="entry name" value="TYR_RECOMBINASE"/>
    <property type="match status" value="1"/>
</dbReference>
<evidence type="ECO:0000255" key="1">
    <source>
        <dbReference type="HAMAP-Rule" id="MF_01808"/>
    </source>
</evidence>
<evidence type="ECO:0000255" key="2">
    <source>
        <dbReference type="PROSITE-ProRule" id="PRU01246"/>
    </source>
</evidence>
<evidence type="ECO:0000255" key="3">
    <source>
        <dbReference type="PROSITE-ProRule" id="PRU01248"/>
    </source>
</evidence>
<proteinExistence type="inferred from homology"/>